<accession>Q03QY0</accession>
<protein>
    <recommendedName>
        <fullName evidence="1">Serine hydroxymethyltransferase</fullName>
        <shortName evidence="1">SHMT</shortName>
        <shortName evidence="1">Serine methylase</shortName>
        <ecNumber evidence="1">2.1.2.1</ecNumber>
    </recommendedName>
</protein>
<reference key="1">
    <citation type="journal article" date="2006" name="Proc. Natl. Acad. Sci. U.S.A.">
        <title>Comparative genomics of the lactic acid bacteria.</title>
        <authorList>
            <person name="Makarova K.S."/>
            <person name="Slesarev A."/>
            <person name="Wolf Y.I."/>
            <person name="Sorokin A."/>
            <person name="Mirkin B."/>
            <person name="Koonin E.V."/>
            <person name="Pavlov A."/>
            <person name="Pavlova N."/>
            <person name="Karamychev V."/>
            <person name="Polouchine N."/>
            <person name="Shakhova V."/>
            <person name="Grigoriev I."/>
            <person name="Lou Y."/>
            <person name="Rohksar D."/>
            <person name="Lucas S."/>
            <person name="Huang K."/>
            <person name="Goodstein D.M."/>
            <person name="Hawkins T."/>
            <person name="Plengvidhya V."/>
            <person name="Welker D."/>
            <person name="Hughes J."/>
            <person name="Goh Y."/>
            <person name="Benson A."/>
            <person name="Baldwin K."/>
            <person name="Lee J.-H."/>
            <person name="Diaz-Muniz I."/>
            <person name="Dosti B."/>
            <person name="Smeianov V."/>
            <person name="Wechter W."/>
            <person name="Barabote R."/>
            <person name="Lorca G."/>
            <person name="Altermann E."/>
            <person name="Barrangou R."/>
            <person name="Ganesan B."/>
            <person name="Xie Y."/>
            <person name="Rawsthorne H."/>
            <person name="Tamir D."/>
            <person name="Parker C."/>
            <person name="Breidt F."/>
            <person name="Broadbent J.R."/>
            <person name="Hutkins R."/>
            <person name="O'Sullivan D."/>
            <person name="Steele J."/>
            <person name="Unlu G."/>
            <person name="Saier M.H. Jr."/>
            <person name="Klaenhammer T."/>
            <person name="Richardson P."/>
            <person name="Kozyavkin S."/>
            <person name="Weimer B.C."/>
            <person name="Mills D.A."/>
        </authorList>
    </citation>
    <scope>NUCLEOTIDE SEQUENCE [LARGE SCALE GENOMIC DNA]</scope>
    <source>
        <strain>ATCC 367 / BCRC 12310 / CIP 105137 / JCM 1170 / LMG 11437 / NCIMB 947 / NCTC 947</strain>
    </source>
</reference>
<feature type="chain" id="PRO_1000006268" description="Serine hydroxymethyltransferase">
    <location>
        <begin position="1"/>
        <end position="413"/>
    </location>
</feature>
<feature type="binding site" evidence="1">
    <location>
        <position position="116"/>
    </location>
    <ligand>
        <name>(6S)-5,6,7,8-tetrahydrofolate</name>
        <dbReference type="ChEBI" id="CHEBI:57453"/>
    </ligand>
</feature>
<feature type="binding site" evidence="1">
    <location>
        <begin position="120"/>
        <end position="122"/>
    </location>
    <ligand>
        <name>(6S)-5,6,7,8-tetrahydrofolate</name>
        <dbReference type="ChEBI" id="CHEBI:57453"/>
    </ligand>
</feature>
<feature type="binding site" evidence="1">
    <location>
        <begin position="349"/>
        <end position="351"/>
    </location>
    <ligand>
        <name>(6S)-5,6,7,8-tetrahydrofolate</name>
        <dbReference type="ChEBI" id="CHEBI:57453"/>
    </ligand>
</feature>
<feature type="site" description="Plays an important role in substrate specificity" evidence="1">
    <location>
        <position position="224"/>
    </location>
</feature>
<feature type="modified residue" description="N6-(pyridoxal phosphate)lysine" evidence="1">
    <location>
        <position position="225"/>
    </location>
</feature>
<proteinExistence type="inferred from homology"/>
<evidence type="ECO:0000255" key="1">
    <source>
        <dbReference type="HAMAP-Rule" id="MF_00051"/>
    </source>
</evidence>
<keyword id="KW-0028">Amino-acid biosynthesis</keyword>
<keyword id="KW-0963">Cytoplasm</keyword>
<keyword id="KW-0554">One-carbon metabolism</keyword>
<keyword id="KW-0663">Pyridoxal phosphate</keyword>
<keyword id="KW-1185">Reference proteome</keyword>
<keyword id="KW-0808">Transferase</keyword>
<comment type="function">
    <text evidence="1">Catalyzes the reversible interconversion of serine and glycine with tetrahydrofolate (THF) serving as the one-carbon carrier. This reaction serves as the major source of one-carbon groups required for the biosynthesis of purines, thymidylate, methionine, and other important biomolecules. Also exhibits THF-independent aldolase activity toward beta-hydroxyamino acids, producing glycine and aldehydes, via a retro-aldol mechanism.</text>
</comment>
<comment type="catalytic activity">
    <reaction evidence="1">
        <text>(6R)-5,10-methylene-5,6,7,8-tetrahydrofolate + glycine + H2O = (6S)-5,6,7,8-tetrahydrofolate + L-serine</text>
        <dbReference type="Rhea" id="RHEA:15481"/>
        <dbReference type="ChEBI" id="CHEBI:15377"/>
        <dbReference type="ChEBI" id="CHEBI:15636"/>
        <dbReference type="ChEBI" id="CHEBI:33384"/>
        <dbReference type="ChEBI" id="CHEBI:57305"/>
        <dbReference type="ChEBI" id="CHEBI:57453"/>
        <dbReference type="EC" id="2.1.2.1"/>
    </reaction>
</comment>
<comment type="cofactor">
    <cofactor evidence="1">
        <name>pyridoxal 5'-phosphate</name>
        <dbReference type="ChEBI" id="CHEBI:597326"/>
    </cofactor>
</comment>
<comment type="pathway">
    <text evidence="1">One-carbon metabolism; tetrahydrofolate interconversion.</text>
</comment>
<comment type="pathway">
    <text evidence="1">Amino-acid biosynthesis; glycine biosynthesis; glycine from L-serine: step 1/1.</text>
</comment>
<comment type="subunit">
    <text evidence="1">Homodimer.</text>
</comment>
<comment type="subcellular location">
    <subcellularLocation>
        <location evidence="1">Cytoplasm</location>
    </subcellularLocation>
</comment>
<comment type="similarity">
    <text evidence="1">Belongs to the SHMT family.</text>
</comment>
<name>GLYA_LEVBA</name>
<sequence>MNFKEKDPALWGAIADEEQRQEETIELIASENIVSHAVRTAQGSVLTNKYAEGYPGKRYYGGTQYIDVVEQLAIDRAKKLFGAEYANVQPHSGSQANQAVYAAFLKPGDTILGMGLDAGGHLTHGAKVNFSGKLYNSYSYALNPETELLDYDMIRDLARKVKPQLIVAGASAYSRTIDWQAFRSIADEVGAYLMVDMAHIAGLVATGLHPSPVGIADVVTTTTHKTLRGPRGGLILSQAENAKKINSAVFPGTQGGPLEHVIAGKAAAFFEDSQPAFKEYAQQIITNAQAMADEFSQLPTVRVVSGGTDNHLMTLDLSQTALNGKQAQELLDSVLITTNKEAIPNETLSPFKTSGIRLGTPAITTRGFNADESREVARLIVKTLLNPEDEAVLTGVRQRVKELTSAHPLSQLD</sequence>
<dbReference type="EC" id="2.1.2.1" evidence="1"/>
<dbReference type="EMBL" id="CP000416">
    <property type="protein sequence ID" value="ABJ64392.1"/>
    <property type="molecule type" value="Genomic_DNA"/>
</dbReference>
<dbReference type="RefSeq" id="WP_011668156.1">
    <property type="nucleotide sequence ID" value="NC_008497.1"/>
</dbReference>
<dbReference type="SMR" id="Q03QY0"/>
<dbReference type="STRING" id="387344.LVIS_1287"/>
<dbReference type="KEGG" id="lbr:LVIS_1287"/>
<dbReference type="PATRIC" id="fig|387344.15.peg.1228"/>
<dbReference type="eggNOG" id="COG0112">
    <property type="taxonomic scope" value="Bacteria"/>
</dbReference>
<dbReference type="HOGENOM" id="CLU_022477_2_1_9"/>
<dbReference type="UniPathway" id="UPA00193"/>
<dbReference type="UniPathway" id="UPA00288">
    <property type="reaction ID" value="UER01023"/>
</dbReference>
<dbReference type="Proteomes" id="UP000001652">
    <property type="component" value="Chromosome"/>
</dbReference>
<dbReference type="GO" id="GO:0005829">
    <property type="term" value="C:cytosol"/>
    <property type="evidence" value="ECO:0007669"/>
    <property type="project" value="TreeGrafter"/>
</dbReference>
<dbReference type="GO" id="GO:0004372">
    <property type="term" value="F:glycine hydroxymethyltransferase activity"/>
    <property type="evidence" value="ECO:0007669"/>
    <property type="project" value="UniProtKB-UniRule"/>
</dbReference>
<dbReference type="GO" id="GO:0030170">
    <property type="term" value="F:pyridoxal phosphate binding"/>
    <property type="evidence" value="ECO:0007669"/>
    <property type="project" value="UniProtKB-UniRule"/>
</dbReference>
<dbReference type="GO" id="GO:0019264">
    <property type="term" value="P:glycine biosynthetic process from serine"/>
    <property type="evidence" value="ECO:0007669"/>
    <property type="project" value="UniProtKB-UniRule"/>
</dbReference>
<dbReference type="GO" id="GO:0035999">
    <property type="term" value="P:tetrahydrofolate interconversion"/>
    <property type="evidence" value="ECO:0007669"/>
    <property type="project" value="UniProtKB-UniRule"/>
</dbReference>
<dbReference type="CDD" id="cd00378">
    <property type="entry name" value="SHMT"/>
    <property type="match status" value="1"/>
</dbReference>
<dbReference type="FunFam" id="3.40.640.10:FF:000001">
    <property type="entry name" value="Serine hydroxymethyltransferase"/>
    <property type="match status" value="1"/>
</dbReference>
<dbReference type="Gene3D" id="3.90.1150.10">
    <property type="entry name" value="Aspartate Aminotransferase, domain 1"/>
    <property type="match status" value="1"/>
</dbReference>
<dbReference type="Gene3D" id="3.40.640.10">
    <property type="entry name" value="Type I PLP-dependent aspartate aminotransferase-like (Major domain)"/>
    <property type="match status" value="1"/>
</dbReference>
<dbReference type="HAMAP" id="MF_00051">
    <property type="entry name" value="SHMT"/>
    <property type="match status" value="1"/>
</dbReference>
<dbReference type="InterPro" id="IPR015424">
    <property type="entry name" value="PyrdxlP-dep_Trfase"/>
</dbReference>
<dbReference type="InterPro" id="IPR015421">
    <property type="entry name" value="PyrdxlP-dep_Trfase_major"/>
</dbReference>
<dbReference type="InterPro" id="IPR015422">
    <property type="entry name" value="PyrdxlP-dep_Trfase_small"/>
</dbReference>
<dbReference type="InterPro" id="IPR001085">
    <property type="entry name" value="Ser_HO-MeTrfase"/>
</dbReference>
<dbReference type="InterPro" id="IPR049943">
    <property type="entry name" value="Ser_HO-MeTrfase-like"/>
</dbReference>
<dbReference type="InterPro" id="IPR019798">
    <property type="entry name" value="Ser_HO-MeTrfase_PLP_BS"/>
</dbReference>
<dbReference type="InterPro" id="IPR039429">
    <property type="entry name" value="SHMT-like_dom"/>
</dbReference>
<dbReference type="NCBIfam" id="NF000586">
    <property type="entry name" value="PRK00011.1"/>
    <property type="match status" value="1"/>
</dbReference>
<dbReference type="PANTHER" id="PTHR11680">
    <property type="entry name" value="SERINE HYDROXYMETHYLTRANSFERASE"/>
    <property type="match status" value="1"/>
</dbReference>
<dbReference type="PANTHER" id="PTHR11680:SF35">
    <property type="entry name" value="SERINE HYDROXYMETHYLTRANSFERASE 1"/>
    <property type="match status" value="1"/>
</dbReference>
<dbReference type="Pfam" id="PF00464">
    <property type="entry name" value="SHMT"/>
    <property type="match status" value="1"/>
</dbReference>
<dbReference type="PIRSF" id="PIRSF000412">
    <property type="entry name" value="SHMT"/>
    <property type="match status" value="1"/>
</dbReference>
<dbReference type="SUPFAM" id="SSF53383">
    <property type="entry name" value="PLP-dependent transferases"/>
    <property type="match status" value="1"/>
</dbReference>
<dbReference type="PROSITE" id="PS00096">
    <property type="entry name" value="SHMT"/>
    <property type="match status" value="1"/>
</dbReference>
<organism>
    <name type="scientific">Levilactobacillus brevis (strain ATCC 367 / BCRC 12310 / CIP 105137 / JCM 1170 / LMG 11437 / NCIMB 947 / NCTC 947)</name>
    <name type="common">Lactobacillus brevis</name>
    <dbReference type="NCBI Taxonomy" id="387344"/>
    <lineage>
        <taxon>Bacteria</taxon>
        <taxon>Bacillati</taxon>
        <taxon>Bacillota</taxon>
        <taxon>Bacilli</taxon>
        <taxon>Lactobacillales</taxon>
        <taxon>Lactobacillaceae</taxon>
        <taxon>Levilactobacillus</taxon>
    </lineage>
</organism>
<gene>
    <name evidence="1" type="primary">glyA</name>
    <name type="ordered locus">LVIS_1287</name>
</gene>